<proteinExistence type="inferred from homology"/>
<dbReference type="EMBL" id="CP000713">
    <property type="protein sequence ID" value="ABQ93446.1"/>
    <property type="molecule type" value="Genomic_DNA"/>
</dbReference>
<dbReference type="SMR" id="A5WCQ5"/>
<dbReference type="STRING" id="349106.PsycPRwf_0491"/>
<dbReference type="KEGG" id="prw:PsycPRwf_0491"/>
<dbReference type="eggNOG" id="COG2003">
    <property type="taxonomic scope" value="Bacteria"/>
</dbReference>
<dbReference type="HOGENOM" id="CLU_073529_0_2_6"/>
<dbReference type="GO" id="GO:0046872">
    <property type="term" value="F:metal ion binding"/>
    <property type="evidence" value="ECO:0007669"/>
    <property type="project" value="UniProtKB-KW"/>
</dbReference>
<dbReference type="GO" id="GO:0008237">
    <property type="term" value="F:metallopeptidase activity"/>
    <property type="evidence" value="ECO:0007669"/>
    <property type="project" value="UniProtKB-KW"/>
</dbReference>
<dbReference type="GO" id="GO:0006508">
    <property type="term" value="P:proteolysis"/>
    <property type="evidence" value="ECO:0007669"/>
    <property type="project" value="UniProtKB-KW"/>
</dbReference>
<dbReference type="CDD" id="cd08071">
    <property type="entry name" value="MPN_DUF2466"/>
    <property type="match status" value="1"/>
</dbReference>
<dbReference type="Gene3D" id="3.40.140.10">
    <property type="entry name" value="Cytidine Deaminase, domain 2"/>
    <property type="match status" value="1"/>
</dbReference>
<dbReference type="InterPro" id="IPR037518">
    <property type="entry name" value="MPN"/>
</dbReference>
<dbReference type="InterPro" id="IPR025657">
    <property type="entry name" value="RadC_JAB"/>
</dbReference>
<dbReference type="InterPro" id="IPR010994">
    <property type="entry name" value="RuvA_2-like"/>
</dbReference>
<dbReference type="InterPro" id="IPR001405">
    <property type="entry name" value="UPF0758"/>
</dbReference>
<dbReference type="InterPro" id="IPR046778">
    <property type="entry name" value="UPF0758_N"/>
</dbReference>
<dbReference type="NCBIfam" id="NF000642">
    <property type="entry name" value="PRK00024.1"/>
    <property type="match status" value="1"/>
</dbReference>
<dbReference type="NCBIfam" id="TIGR00608">
    <property type="entry name" value="radc"/>
    <property type="match status" value="1"/>
</dbReference>
<dbReference type="PANTHER" id="PTHR30471">
    <property type="entry name" value="DNA REPAIR PROTEIN RADC"/>
    <property type="match status" value="1"/>
</dbReference>
<dbReference type="PANTHER" id="PTHR30471:SF3">
    <property type="entry name" value="UPF0758 PROTEIN YEES-RELATED"/>
    <property type="match status" value="1"/>
</dbReference>
<dbReference type="Pfam" id="PF04002">
    <property type="entry name" value="RadC"/>
    <property type="match status" value="1"/>
</dbReference>
<dbReference type="Pfam" id="PF20582">
    <property type="entry name" value="UPF0758_N"/>
    <property type="match status" value="1"/>
</dbReference>
<dbReference type="SUPFAM" id="SSF102712">
    <property type="entry name" value="JAB1/MPN domain"/>
    <property type="match status" value="1"/>
</dbReference>
<dbReference type="SUPFAM" id="SSF47781">
    <property type="entry name" value="RuvA domain 2-like"/>
    <property type="match status" value="1"/>
</dbReference>
<dbReference type="PROSITE" id="PS50249">
    <property type="entry name" value="MPN"/>
    <property type="match status" value="1"/>
</dbReference>
<protein>
    <recommendedName>
        <fullName>UPF0758 protein PsycPRwf_0491</fullName>
    </recommendedName>
</protein>
<organism>
    <name type="scientific">Psychrobacter sp. (strain PRwf-1)</name>
    <dbReference type="NCBI Taxonomy" id="349106"/>
    <lineage>
        <taxon>Bacteria</taxon>
        <taxon>Pseudomonadati</taxon>
        <taxon>Pseudomonadota</taxon>
        <taxon>Gammaproteobacteria</taxon>
        <taxon>Moraxellales</taxon>
        <taxon>Moraxellaceae</taxon>
        <taxon>Psychrobacter</taxon>
    </lineage>
</organism>
<reference key="1">
    <citation type="submission" date="2007-05" db="EMBL/GenBank/DDBJ databases">
        <title>Complete sequence of chromosome of Psychrobacter sp. PRwf-1.</title>
        <authorList>
            <consortium name="US DOE Joint Genome Institute"/>
            <person name="Copeland A."/>
            <person name="Lucas S."/>
            <person name="Lapidus A."/>
            <person name="Barry K."/>
            <person name="Detter J.C."/>
            <person name="Glavina del Rio T."/>
            <person name="Hammon N."/>
            <person name="Israni S."/>
            <person name="Dalin E."/>
            <person name="Tice H."/>
            <person name="Pitluck S."/>
            <person name="Chain P."/>
            <person name="Malfatti S."/>
            <person name="Shin M."/>
            <person name="Vergez L."/>
            <person name="Schmutz J."/>
            <person name="Larimer F."/>
            <person name="Land M."/>
            <person name="Hauser L."/>
            <person name="Kyrpides N."/>
            <person name="Kim E."/>
            <person name="Tiedje J."/>
            <person name="Richardson P."/>
        </authorList>
    </citation>
    <scope>NUCLEOTIDE SEQUENCE [LARGE SCALE GENOMIC DNA]</scope>
    <source>
        <strain>PRwf-1</strain>
    </source>
</reference>
<comment type="similarity">
    <text evidence="2">Belongs to the UPF0758 family.</text>
</comment>
<gene>
    <name type="ordered locus">PsycPRwf_0491</name>
</gene>
<accession>A5WCQ5</accession>
<keyword id="KW-0378">Hydrolase</keyword>
<keyword id="KW-0479">Metal-binding</keyword>
<keyword id="KW-0482">Metalloprotease</keyword>
<keyword id="KW-0645">Protease</keyword>
<keyword id="KW-0862">Zinc</keyword>
<evidence type="ECO:0000255" key="1">
    <source>
        <dbReference type="PROSITE-ProRule" id="PRU01182"/>
    </source>
</evidence>
<evidence type="ECO:0000305" key="2"/>
<name>Y491_PSYWF</name>
<feature type="chain" id="PRO_0000322698" description="UPF0758 protein PsycPRwf_0491">
    <location>
        <begin position="1"/>
        <end position="226"/>
    </location>
</feature>
<feature type="domain" description="MPN" evidence="1">
    <location>
        <begin position="102"/>
        <end position="224"/>
    </location>
</feature>
<feature type="short sequence motif" description="JAMM motif" evidence="1">
    <location>
        <begin position="173"/>
        <end position="186"/>
    </location>
</feature>
<feature type="binding site" evidence="1">
    <location>
        <position position="173"/>
    </location>
    <ligand>
        <name>Zn(2+)</name>
        <dbReference type="ChEBI" id="CHEBI:29105"/>
        <note>catalytic</note>
    </ligand>
</feature>
<feature type="binding site" evidence="1">
    <location>
        <position position="175"/>
    </location>
    <ligand>
        <name>Zn(2+)</name>
        <dbReference type="ChEBI" id="CHEBI:29105"/>
        <note>catalytic</note>
    </ligand>
</feature>
<feature type="binding site" evidence="1">
    <location>
        <position position="186"/>
    </location>
    <ligand>
        <name>Zn(2+)</name>
        <dbReference type="ChEBI" id="CHEBI:29105"/>
        <note>catalytic</note>
    </ligand>
</feature>
<sequence>MAIKDWHEEDRPREKLLNLGAEYLTDAEILAIFLRTGSKQQSAIELARSLIDHFGGIAELLAAPKEAVLACHGIGTAKYAQLLASLEMGKRYLNSELKSGNSLNRSQVVKDYITTQIRRESKEVFAVLCLDNGLNLLDYKVLFVGGLSSCSVCVKQVLRHALEQGASQIIIAHNHPNQDATPSAADIHLTQTLKLACEAIDLRLTDHIIVGRNQTLSFAETATAPF</sequence>